<accession>P85936</accession>
<dbReference type="GO" id="GO:0009507">
    <property type="term" value="C:chloroplast"/>
    <property type="evidence" value="ECO:0007669"/>
    <property type="project" value="UniProtKB-SubCell"/>
</dbReference>
<proteinExistence type="evidence at protein level"/>
<feature type="chain" id="PRO_0000397961" description="Protein DCL, chloroplastic">
    <location>
        <begin position="1" status="less than"/>
        <end position="23" status="greater than"/>
    </location>
</feature>
<feature type="non-terminal residue" evidence="2">
    <location>
        <position position="1"/>
    </location>
</feature>
<feature type="non-terminal residue" evidence="2">
    <location>
        <position position="23"/>
    </location>
</feature>
<protein>
    <recommendedName>
        <fullName evidence="1">Protein DCL, chloroplastic</fullName>
    </recommendedName>
    <alternativeName>
        <fullName evidence="1">Defective chloroplasts and leaves protein</fullName>
    </alternativeName>
</protein>
<name>DCL_PSEMZ</name>
<keyword id="KW-0150">Chloroplast</keyword>
<keyword id="KW-0934">Plastid</keyword>
<organism>
    <name type="scientific">Pseudotsuga menziesii</name>
    <name type="common">Douglas-fir</name>
    <name type="synonym">Abies menziesii</name>
    <dbReference type="NCBI Taxonomy" id="3357"/>
    <lineage>
        <taxon>Eukaryota</taxon>
        <taxon>Viridiplantae</taxon>
        <taxon>Streptophyta</taxon>
        <taxon>Embryophyta</taxon>
        <taxon>Tracheophyta</taxon>
        <taxon>Spermatophyta</taxon>
        <taxon>Pinopsida</taxon>
        <taxon>Pinidae</taxon>
        <taxon>Conifers I</taxon>
        <taxon>Pinales</taxon>
        <taxon>Pinaceae</taxon>
        <taxon>Pseudotsuga</taxon>
    </lineage>
</organism>
<reference evidence="3" key="1">
    <citation type="journal article" date="2008" name="J. Proteomics">
        <title>A proteomics approach to identify proteins differentially expressed in Douglas-fir seedlings infected by Phellinus sulphurascens.</title>
        <authorList>
            <person name="Islam M.A."/>
            <person name="Sturrock R.N."/>
            <person name="Ekramoddoullah A.K.M."/>
        </authorList>
    </citation>
    <scope>IDENTIFICATION BY MASS SPECTROMETRY</scope>
</reference>
<comment type="function">
    <text evidence="1">Has a function in the early stage of chloroplast development and palisade cell morphogenesis.</text>
</comment>
<comment type="subcellular location">
    <subcellularLocation>
        <location evidence="1">Plastid</location>
        <location evidence="1">Chloroplast</location>
    </subcellularLocation>
</comment>
<evidence type="ECO:0000250" key="1">
    <source>
        <dbReference type="UniProtKB" id="Q42463"/>
    </source>
</evidence>
<evidence type="ECO:0000303" key="2">
    <source>
    </source>
</evidence>
<evidence type="ECO:0000305" key="3"/>
<sequence>AWVDWEDQILQDTVPLVNFVRMI</sequence>